<dbReference type="EMBL" id="M77207">
    <property type="protein sequence ID" value="AAA24952.1"/>
    <property type="molecule type" value="Genomic_DNA"/>
</dbReference>
<dbReference type="EMBL" id="L42023">
    <property type="protein sequence ID" value="AAC22618.1"/>
    <property type="molecule type" value="Genomic_DNA"/>
</dbReference>
<dbReference type="PIR" id="B38225">
    <property type="entry name" value="B38225"/>
</dbReference>
<dbReference type="RefSeq" id="NP_439118.1">
    <property type="nucleotide sequence ID" value="NC_000907.1"/>
</dbReference>
<dbReference type="SMR" id="P29281"/>
<dbReference type="STRING" id="71421.HI_0957"/>
<dbReference type="EnsemblBacteria" id="AAC22618">
    <property type="protein sequence ID" value="AAC22618"/>
    <property type="gene ID" value="HI_0957"/>
</dbReference>
<dbReference type="KEGG" id="hin:HI_0957"/>
<dbReference type="PATRIC" id="fig|71421.8.peg.999"/>
<dbReference type="eggNOG" id="COG0664">
    <property type="taxonomic scope" value="Bacteria"/>
</dbReference>
<dbReference type="HOGENOM" id="CLU_075053_3_5_6"/>
<dbReference type="OrthoDB" id="61906at2"/>
<dbReference type="PhylomeDB" id="P29281"/>
<dbReference type="BioCyc" id="HINF71421:G1GJ1-998-MONOMER"/>
<dbReference type="Proteomes" id="UP000000579">
    <property type="component" value="Chromosome"/>
</dbReference>
<dbReference type="GO" id="GO:0005829">
    <property type="term" value="C:cytosol"/>
    <property type="evidence" value="ECO:0000318"/>
    <property type="project" value="GO_Central"/>
</dbReference>
<dbReference type="GO" id="GO:0030552">
    <property type="term" value="F:cAMP binding"/>
    <property type="evidence" value="ECO:0007669"/>
    <property type="project" value="UniProtKB-KW"/>
</dbReference>
<dbReference type="GO" id="GO:0003677">
    <property type="term" value="F:DNA binding"/>
    <property type="evidence" value="ECO:0007669"/>
    <property type="project" value="UniProtKB-KW"/>
</dbReference>
<dbReference type="GO" id="GO:0003700">
    <property type="term" value="F:DNA-binding transcription factor activity"/>
    <property type="evidence" value="ECO:0000318"/>
    <property type="project" value="GO_Central"/>
</dbReference>
<dbReference type="GO" id="GO:0030420">
    <property type="term" value="P:establishment of competence for transformation"/>
    <property type="evidence" value="ECO:0007669"/>
    <property type="project" value="UniProtKB-KW"/>
</dbReference>
<dbReference type="CDD" id="cd00038">
    <property type="entry name" value="CAP_ED"/>
    <property type="match status" value="1"/>
</dbReference>
<dbReference type="CDD" id="cd00092">
    <property type="entry name" value="HTH_CRP"/>
    <property type="match status" value="1"/>
</dbReference>
<dbReference type="FunFam" id="1.10.10.10:FF:000006">
    <property type="entry name" value="cAMP-activated global transcriptional regulator CRP"/>
    <property type="match status" value="1"/>
</dbReference>
<dbReference type="FunFam" id="2.60.120.10:FF:000001">
    <property type="entry name" value="cAMP-activated global transcriptional regulator CRP"/>
    <property type="match status" value="1"/>
</dbReference>
<dbReference type="Gene3D" id="2.60.120.10">
    <property type="entry name" value="Jelly Rolls"/>
    <property type="match status" value="1"/>
</dbReference>
<dbReference type="Gene3D" id="1.10.10.10">
    <property type="entry name" value="Winged helix-like DNA-binding domain superfamily/Winged helix DNA-binding domain"/>
    <property type="match status" value="1"/>
</dbReference>
<dbReference type="InterPro" id="IPR018488">
    <property type="entry name" value="cNMP-bd_CS"/>
</dbReference>
<dbReference type="InterPro" id="IPR000595">
    <property type="entry name" value="cNMP-bd_dom"/>
</dbReference>
<dbReference type="InterPro" id="IPR018490">
    <property type="entry name" value="cNMP-bd_dom_sf"/>
</dbReference>
<dbReference type="InterPro" id="IPR050397">
    <property type="entry name" value="Env_Response_Regulators"/>
</dbReference>
<dbReference type="InterPro" id="IPR012318">
    <property type="entry name" value="HTH_CRP"/>
</dbReference>
<dbReference type="InterPro" id="IPR014710">
    <property type="entry name" value="RmlC-like_jellyroll"/>
</dbReference>
<dbReference type="InterPro" id="IPR018335">
    <property type="entry name" value="Tscrpt_reg_HTH_Crp-type_CS"/>
</dbReference>
<dbReference type="InterPro" id="IPR036388">
    <property type="entry name" value="WH-like_DNA-bd_sf"/>
</dbReference>
<dbReference type="InterPro" id="IPR036390">
    <property type="entry name" value="WH_DNA-bd_sf"/>
</dbReference>
<dbReference type="NCBIfam" id="NF008732">
    <property type="entry name" value="PRK11753.1"/>
    <property type="match status" value="1"/>
</dbReference>
<dbReference type="PANTHER" id="PTHR24567">
    <property type="entry name" value="CRP FAMILY TRANSCRIPTIONAL REGULATORY PROTEIN"/>
    <property type="match status" value="1"/>
</dbReference>
<dbReference type="PANTHER" id="PTHR24567:SF68">
    <property type="entry name" value="DNA-BINDING TRANSCRIPTIONAL DUAL REGULATOR CRP"/>
    <property type="match status" value="1"/>
</dbReference>
<dbReference type="Pfam" id="PF00027">
    <property type="entry name" value="cNMP_binding"/>
    <property type="match status" value="1"/>
</dbReference>
<dbReference type="Pfam" id="PF13545">
    <property type="entry name" value="HTH_Crp_2"/>
    <property type="match status" value="1"/>
</dbReference>
<dbReference type="PRINTS" id="PR00034">
    <property type="entry name" value="HTHCRP"/>
</dbReference>
<dbReference type="SMART" id="SM00100">
    <property type="entry name" value="cNMP"/>
    <property type="match status" value="1"/>
</dbReference>
<dbReference type="SMART" id="SM00419">
    <property type="entry name" value="HTH_CRP"/>
    <property type="match status" value="1"/>
</dbReference>
<dbReference type="SUPFAM" id="SSF51206">
    <property type="entry name" value="cAMP-binding domain-like"/>
    <property type="match status" value="1"/>
</dbReference>
<dbReference type="SUPFAM" id="SSF46785">
    <property type="entry name" value="Winged helix' DNA-binding domain"/>
    <property type="match status" value="1"/>
</dbReference>
<dbReference type="PROSITE" id="PS00888">
    <property type="entry name" value="CNMP_BINDING_1"/>
    <property type="match status" value="1"/>
</dbReference>
<dbReference type="PROSITE" id="PS00889">
    <property type="entry name" value="CNMP_BINDING_2"/>
    <property type="match status" value="1"/>
</dbReference>
<dbReference type="PROSITE" id="PS50042">
    <property type="entry name" value="CNMP_BINDING_3"/>
    <property type="match status" value="1"/>
</dbReference>
<dbReference type="PROSITE" id="PS00042">
    <property type="entry name" value="HTH_CRP_1"/>
    <property type="match status" value="1"/>
</dbReference>
<dbReference type="PROSITE" id="PS51063">
    <property type="entry name" value="HTH_CRP_2"/>
    <property type="match status" value="1"/>
</dbReference>
<organism>
    <name type="scientific">Haemophilus influenzae (strain ATCC 51907 / DSM 11121 / KW20 / Rd)</name>
    <dbReference type="NCBI Taxonomy" id="71421"/>
    <lineage>
        <taxon>Bacteria</taxon>
        <taxon>Pseudomonadati</taxon>
        <taxon>Pseudomonadota</taxon>
        <taxon>Gammaproteobacteria</taxon>
        <taxon>Pasteurellales</taxon>
        <taxon>Pasteurellaceae</taxon>
        <taxon>Haemophilus</taxon>
    </lineage>
</organism>
<comment type="function">
    <text evidence="3 4">A global transcription regulator required for bacterial competence. Complexes with cyclic AMP (cAMP) which allosterically activates DNA binding (to consensus sequence 5'-AAATGTGATCTAGATCACATTT-3') to regulate transcription at 54 promoters (PubMed:15769466). There are 2 consensus subclasses; CRP-N (above) and CRP-S (T6 changed to C and A17 changed to G) which obligatorily also requires Sxy for expression. CRP-S sites bind DNA but do not activate transcription in the absence of Sxy. Probably induces a severe bend in DNA. Probably acts as a negative regulator of its own synthesis as well as for adenylate cyclase (cyaA), which generates cAMP.</text>
</comment>
<comment type="subunit">
    <text evidence="1 6">Homodimer, which upon binding cAMP is able to bind DNA (Probable). Binds RNA polymerase subunit RpoA (By similarity).</text>
</comment>
<comment type="induction">
    <text evidence="4">Constitutively expressed; slightly induced on shifting to starvation media.</text>
</comment>
<comment type="domain">
    <text evidence="1">The N-terminal domain binds cAMP and is responsible for homodimerization, while the C-terminal domain binds DNA when cAMP is bound.</text>
</comment>
<comment type="disruption phenotype">
    <text evidence="3 5">Loss of competence, the ability to bind, take-up and integrate exogenous DNA. Loss of the ability to ferment ribose or xylose.</text>
</comment>
<name>CRP_HAEIN</name>
<protein>
    <recommendedName>
        <fullName>cAMP-activated global transcriptional regulator CRP</fullName>
    </recommendedName>
    <alternativeName>
        <fullName>Catabolite activator protein</fullName>
        <shortName>CAP</shortName>
    </alternativeName>
    <alternativeName>
        <fullName>cAMP receptor protein</fullName>
        <shortName>CRP</shortName>
    </alternativeName>
    <alternativeName>
        <fullName>cAMP regulatory protein</fullName>
    </alternativeName>
</protein>
<feature type="chain" id="PRO_0000100147" description="cAMP-activated global transcriptional regulator CRP">
    <location>
        <begin position="1"/>
        <end position="224"/>
    </location>
</feature>
<feature type="domain" description="HTH crp-type" evidence="2">
    <location>
        <begin position="152"/>
        <end position="224"/>
    </location>
</feature>
<feature type="DNA-binding region" description="H-T-H motif" evidence="2">
    <location>
        <begin position="194"/>
        <end position="200"/>
    </location>
</feature>
<feature type="region of interest" description="Activating region 2 (AR2); probably contacts the N-terminus of RpoA" evidence="1">
    <location>
        <begin position="34"/>
        <end position="36"/>
    </location>
</feature>
<feature type="region of interest" description="Activating region 3 (AR3); probably contacts sigma-70 (RpoD)" evidence="1">
    <location>
        <begin position="67"/>
        <end position="73"/>
    </location>
</feature>
<feature type="region of interest" description="Activating region 1 (AR1); probably contacts the C-terminus of RpoA" evidence="1">
    <location>
        <begin position="168"/>
        <end position="177"/>
    </location>
</feature>
<feature type="binding site" evidence="1">
    <location>
        <begin position="71"/>
        <end position="77"/>
    </location>
    <ligand>
        <name>3',5'-cyclic AMP</name>
        <dbReference type="ChEBI" id="CHEBI:58165"/>
        <label>1</label>
    </ligand>
</feature>
<feature type="binding site" evidence="1">
    <location>
        <begin position="86"/>
        <end position="88"/>
    </location>
    <ligand>
        <name>3',5'-cyclic AMP</name>
        <dbReference type="ChEBI" id="CHEBI:58165"/>
        <label>1</label>
    </ligand>
</feature>
<feature type="binding site" evidence="1">
    <location>
        <begin position="97"/>
        <end position="98"/>
    </location>
    <ligand>
        <name>3',5'-cyclic AMP</name>
        <dbReference type="ChEBI" id="CHEBI:58165"/>
        <label>1</label>
    </ligand>
</feature>
<feature type="binding site" evidence="1">
    <location>
        <begin position="142"/>
        <end position="143"/>
    </location>
    <ligand>
        <name>3',5'-cyclic AMP</name>
        <dbReference type="ChEBI" id="CHEBI:58165"/>
        <label>1</label>
    </ligand>
</feature>
<feature type="binding site" evidence="1">
    <location>
        <begin position="150"/>
        <end position="151"/>
    </location>
    <ligand>
        <name>3',5'-cyclic AMP</name>
        <dbReference type="ChEBI" id="CHEBI:58165"/>
        <label>2</label>
    </ligand>
</feature>
<feature type="binding site" evidence="1">
    <location>
        <begin position="185"/>
        <end position="195"/>
    </location>
    <ligand>
        <name>3',5'-cyclic AMP</name>
        <dbReference type="ChEBI" id="CHEBI:58165"/>
        <label>2</label>
    </ligand>
</feature>
<feature type="site" description="Activating region 2 (AR2); probably contacts the N-terminus of RpoA" evidence="1">
    <location>
        <position position="111"/>
    </location>
</feature>
<feature type="site" description="Activating region 2 (AR2); probably contacts the N-terminus of RpoA" evidence="1">
    <location>
        <position position="116"/>
    </location>
</feature>
<feature type="modified residue" description="N6-acetyllysine" evidence="1">
    <location>
        <position position="115"/>
    </location>
</feature>
<proteinExistence type="evidence at protein level"/>
<evidence type="ECO:0000250" key="1"/>
<evidence type="ECO:0000255" key="2">
    <source>
        <dbReference type="PROSITE-ProRule" id="PRU00387"/>
    </source>
</evidence>
<evidence type="ECO:0000269" key="3">
    <source>
    </source>
</evidence>
<evidence type="ECO:0000269" key="4">
    <source>
    </source>
</evidence>
<evidence type="ECO:0000269" key="5">
    <source>
    </source>
</evidence>
<evidence type="ECO:0000305" key="6"/>
<sequence>MSNELTEIDEVVTSSQEEATQRDPVLDWFLTHCHLHKYPAKSTLIHAGEDATTLYYVIKGSVMVSSKDDEGKEMILTYLGAGQFFGEAGLFDEGSKRSAWVKTKTTCEIAEISYKKYRQLIQANPEILMFLTAQLARRLQNTSRQVTNLAFLDVAGRIAQTLMNLAKQPEAMTHPDGMQIKITRQEIGQMVGCSRETVGRIIKMLEDQNLIHAHGKTIVVYGAR</sequence>
<gene>
    <name type="primary">crp</name>
    <name type="synonym">cap</name>
    <name type="ordered locus">HI_0957</name>
</gene>
<reference key="1">
    <citation type="journal article" date="1992" name="Proc. Natl. Acad. Sci. U.S.A.">
        <title>The gene encoding cAMP receptor protein is required for competence development in Haemophilus influenzae Rd.</title>
        <authorList>
            <person name="Chandler M.S."/>
        </authorList>
    </citation>
    <scope>NUCLEOTIDE SEQUENCE [GENOMIC DNA]</scope>
    <scope>FUNCTION</scope>
    <scope>PROBABLE AUTOREGULATION</scope>
    <scope>DISRUPTION PHENOTYPE</scope>
    <source>
        <strain>ATCC 51907 / DSM 11121 / KW20 / Rd</strain>
    </source>
</reference>
<reference key="2">
    <citation type="journal article" date="1995" name="Science">
        <title>Whole-genome random sequencing and assembly of Haemophilus influenzae Rd.</title>
        <authorList>
            <person name="Fleischmann R.D."/>
            <person name="Adams M.D."/>
            <person name="White O."/>
            <person name="Clayton R.A."/>
            <person name="Kirkness E.F."/>
            <person name="Kerlavage A.R."/>
            <person name="Bult C.J."/>
            <person name="Tomb J.-F."/>
            <person name="Dougherty B.A."/>
            <person name="Merrick J.M."/>
            <person name="McKenney K."/>
            <person name="Sutton G.G."/>
            <person name="FitzHugh W."/>
            <person name="Fields C.A."/>
            <person name="Gocayne J.D."/>
            <person name="Scott J.D."/>
            <person name="Shirley R."/>
            <person name="Liu L.-I."/>
            <person name="Glodek A."/>
            <person name="Kelley J.M."/>
            <person name="Weidman J.F."/>
            <person name="Phillips C.A."/>
            <person name="Spriggs T."/>
            <person name="Hedblom E."/>
            <person name="Cotton M.D."/>
            <person name="Utterback T.R."/>
            <person name="Hanna M.C."/>
            <person name="Nguyen D.T."/>
            <person name="Saudek D.M."/>
            <person name="Brandon R.C."/>
            <person name="Fine L.D."/>
            <person name="Fritchman J.L."/>
            <person name="Fuhrmann J.L."/>
            <person name="Geoghagen N.S.M."/>
            <person name="Gnehm C.L."/>
            <person name="McDonald L.A."/>
            <person name="Small K.V."/>
            <person name="Fraser C.M."/>
            <person name="Smith H.O."/>
            <person name="Venter J.C."/>
        </authorList>
    </citation>
    <scope>NUCLEOTIDE SEQUENCE [LARGE SCALE GENOMIC DNA]</scope>
    <source>
        <strain>ATCC 51907 / DSM 11121 / KW20 / Rd</strain>
    </source>
</reference>
<reference key="3">
    <citation type="journal article" date="1993" name="J. Bacteriol.">
        <title>The Haemophilus influenzae adenylate cyclase gene: cloning, sequence, and essential role in competence.</title>
        <authorList>
            <person name="Dorocicz I.R."/>
            <person name="Williams P.M."/>
            <person name="Redfield R.J."/>
        </authorList>
    </citation>
    <scope>DISRUPTION PHENOTYPE</scope>
    <source>
        <strain>ATCC 51907 / DSM 11121 / KW20 / Rd</strain>
    </source>
</reference>
<reference key="4">
    <citation type="journal article" date="2005" name="J. Mol. Biol.">
        <title>A novel CRP-dependent regulon controls expression of competence genes in Haemophilus influenzae.</title>
        <authorList>
            <person name="Redfield R.J."/>
            <person name="Cameron A.D."/>
            <person name="Qian Q."/>
            <person name="Hinds J."/>
            <person name="Ali T.R."/>
            <person name="Kroll J.S."/>
            <person name="Langford P.R."/>
        </authorList>
    </citation>
    <scope>FUNCTION</scope>
    <scope>REGULON</scope>
    <scope>INDUCTION</scope>
    <source>
        <strain>ATCC 51907 / DSM 11121 / KW20 / Rd</strain>
    </source>
</reference>
<reference key="5">
    <citation type="journal article" date="2008" name="J. Mol. Biol.">
        <title>CRP binding and transcription activation at CRP-S sites.</title>
        <authorList>
            <person name="Cameron A.D."/>
            <person name="Redfield R.J."/>
        </authorList>
    </citation>
    <scope>DNA-BINDING</scope>
    <source>
        <strain>ATCC 51907 / DSM 11121 / KW20 / Rd</strain>
    </source>
</reference>
<keyword id="KW-0007">Acetylation</keyword>
<keyword id="KW-0010">Activator</keyword>
<keyword id="KW-0114">cAMP</keyword>
<keyword id="KW-0116">cAMP-binding</keyword>
<keyword id="KW-0178">Competence</keyword>
<keyword id="KW-0238">DNA-binding</keyword>
<keyword id="KW-0547">Nucleotide-binding</keyword>
<keyword id="KW-1185">Reference proteome</keyword>
<keyword id="KW-0804">Transcription</keyword>
<keyword id="KW-0805">Transcription regulation</keyword>
<accession>P29281</accession>